<organism>
    <name type="scientific">Escherichia coli O157:H7</name>
    <dbReference type="NCBI Taxonomy" id="83334"/>
    <lineage>
        <taxon>Bacteria</taxon>
        <taxon>Pseudomonadati</taxon>
        <taxon>Pseudomonadota</taxon>
        <taxon>Gammaproteobacteria</taxon>
        <taxon>Enterobacterales</taxon>
        <taxon>Enterobacteriaceae</taxon>
        <taxon>Escherichia</taxon>
    </lineage>
</organism>
<evidence type="ECO:0000250" key="1"/>
<evidence type="ECO:0000255" key="2">
    <source>
        <dbReference type="HAMAP-Rule" id="MF_00086"/>
    </source>
</evidence>
<sequence>MAKHLFTSESVSEGHPDKIADQISDAVLDAILEQDPKARVACETYVKTGMVLVGGEITTSAWVDIEEITRNTVREIGYVHSDMGFDANSCAVLSAIGKQSPDINQGVDRADPLEQGAGDQGLMFGYATNETDVLMPAPITYAHRLVQRQAEVRKNGTLPWLRPDAKSQVTFQYDDGKIVGIDAVVLSTQHSEEIDQKSLQEAVMEEIIKPILPAEWLTSATKFFINPTGRFVIGGPMGDCGLTGRKIIVDTYGGMARHGGGAFSGKDPSKVDRSAAYAARYVAKNIVAAGLADRCEIQVSYAIGVAEPTSIMVETFGTEKVPSEQLTLLVREFFDLRPYGLIQMLDLLHPIYKETAAYGHFGREHFPWEKTDKAQLLRDAAGLK</sequence>
<accession>P0A819</accession>
<accession>P04384</accession>
<accession>P30869</accession>
<gene>
    <name evidence="2" type="primary">metK</name>
    <name type="ordered locus">Z4287</name>
    <name type="ordered locus">ECs3818</name>
</gene>
<dbReference type="EC" id="2.5.1.6" evidence="2"/>
<dbReference type="EMBL" id="AE005174">
    <property type="protein sequence ID" value="AAG58073.1"/>
    <property type="molecule type" value="Genomic_DNA"/>
</dbReference>
<dbReference type="EMBL" id="BA000007">
    <property type="protein sequence ID" value="BAB37241.1"/>
    <property type="molecule type" value="Genomic_DNA"/>
</dbReference>
<dbReference type="PIR" id="B91106">
    <property type="entry name" value="B91106"/>
</dbReference>
<dbReference type="PIR" id="E85951">
    <property type="entry name" value="E85951"/>
</dbReference>
<dbReference type="RefSeq" id="NP_311845.1">
    <property type="nucleotide sequence ID" value="NC_002695.1"/>
</dbReference>
<dbReference type="RefSeq" id="WP_001062128.1">
    <property type="nucleotide sequence ID" value="NZ_VOAI01000003.1"/>
</dbReference>
<dbReference type="SMR" id="P0A819"/>
<dbReference type="STRING" id="155864.Z4287"/>
<dbReference type="GeneID" id="916356"/>
<dbReference type="GeneID" id="93779055"/>
<dbReference type="KEGG" id="ece:Z4287"/>
<dbReference type="KEGG" id="ecs:ECs_3818"/>
<dbReference type="PATRIC" id="fig|386585.9.peg.3984"/>
<dbReference type="eggNOG" id="COG0192">
    <property type="taxonomic scope" value="Bacteria"/>
</dbReference>
<dbReference type="HOGENOM" id="CLU_041802_1_1_6"/>
<dbReference type="OMA" id="ASYMARY"/>
<dbReference type="UniPathway" id="UPA00315">
    <property type="reaction ID" value="UER00080"/>
</dbReference>
<dbReference type="Proteomes" id="UP000000558">
    <property type="component" value="Chromosome"/>
</dbReference>
<dbReference type="Proteomes" id="UP000002519">
    <property type="component" value="Chromosome"/>
</dbReference>
<dbReference type="GO" id="GO:0005737">
    <property type="term" value="C:cytoplasm"/>
    <property type="evidence" value="ECO:0007669"/>
    <property type="project" value="UniProtKB-SubCell"/>
</dbReference>
<dbReference type="GO" id="GO:0005524">
    <property type="term" value="F:ATP binding"/>
    <property type="evidence" value="ECO:0000303"/>
    <property type="project" value="UniProtKB"/>
</dbReference>
<dbReference type="GO" id="GO:0000287">
    <property type="term" value="F:magnesium ion binding"/>
    <property type="evidence" value="ECO:0000303"/>
    <property type="project" value="UniProtKB"/>
</dbReference>
<dbReference type="GO" id="GO:0004478">
    <property type="term" value="F:methionine adenosyltransferase activity"/>
    <property type="evidence" value="ECO:0000303"/>
    <property type="project" value="UniProtKB"/>
</dbReference>
<dbReference type="GO" id="GO:0030955">
    <property type="term" value="F:potassium ion binding"/>
    <property type="evidence" value="ECO:0000303"/>
    <property type="project" value="UniProtKB"/>
</dbReference>
<dbReference type="GO" id="GO:0006730">
    <property type="term" value="P:one-carbon metabolic process"/>
    <property type="evidence" value="ECO:0007669"/>
    <property type="project" value="UniProtKB-KW"/>
</dbReference>
<dbReference type="GO" id="GO:0006556">
    <property type="term" value="P:S-adenosylmethionine biosynthetic process"/>
    <property type="evidence" value="ECO:0007669"/>
    <property type="project" value="UniProtKB-UniRule"/>
</dbReference>
<dbReference type="CDD" id="cd18079">
    <property type="entry name" value="S-AdoMet_synt"/>
    <property type="match status" value="1"/>
</dbReference>
<dbReference type="FunFam" id="3.30.300.10:FF:000001">
    <property type="entry name" value="S-adenosylmethionine synthase"/>
    <property type="match status" value="1"/>
</dbReference>
<dbReference type="FunFam" id="3.30.300.10:FF:000003">
    <property type="entry name" value="S-adenosylmethionine synthase"/>
    <property type="match status" value="1"/>
</dbReference>
<dbReference type="Gene3D" id="3.30.300.10">
    <property type="match status" value="3"/>
</dbReference>
<dbReference type="HAMAP" id="MF_00086">
    <property type="entry name" value="S_AdoMet_synth1"/>
    <property type="match status" value="1"/>
</dbReference>
<dbReference type="InterPro" id="IPR022631">
    <property type="entry name" value="ADOMET_SYNTHASE_CS"/>
</dbReference>
<dbReference type="InterPro" id="IPR022630">
    <property type="entry name" value="S-AdoMet_synt_C"/>
</dbReference>
<dbReference type="InterPro" id="IPR022629">
    <property type="entry name" value="S-AdoMet_synt_central"/>
</dbReference>
<dbReference type="InterPro" id="IPR022628">
    <property type="entry name" value="S-AdoMet_synt_N"/>
</dbReference>
<dbReference type="InterPro" id="IPR002133">
    <property type="entry name" value="S-AdoMet_synthetase"/>
</dbReference>
<dbReference type="InterPro" id="IPR022636">
    <property type="entry name" value="S-AdoMet_synthetase_sfam"/>
</dbReference>
<dbReference type="NCBIfam" id="TIGR01034">
    <property type="entry name" value="metK"/>
    <property type="match status" value="1"/>
</dbReference>
<dbReference type="PANTHER" id="PTHR11964">
    <property type="entry name" value="S-ADENOSYLMETHIONINE SYNTHETASE"/>
    <property type="match status" value="1"/>
</dbReference>
<dbReference type="Pfam" id="PF02773">
    <property type="entry name" value="S-AdoMet_synt_C"/>
    <property type="match status" value="1"/>
</dbReference>
<dbReference type="Pfam" id="PF02772">
    <property type="entry name" value="S-AdoMet_synt_M"/>
    <property type="match status" value="1"/>
</dbReference>
<dbReference type="Pfam" id="PF00438">
    <property type="entry name" value="S-AdoMet_synt_N"/>
    <property type="match status" value="1"/>
</dbReference>
<dbReference type="PIRSF" id="PIRSF000497">
    <property type="entry name" value="MAT"/>
    <property type="match status" value="1"/>
</dbReference>
<dbReference type="SUPFAM" id="SSF55973">
    <property type="entry name" value="S-adenosylmethionine synthetase"/>
    <property type="match status" value="3"/>
</dbReference>
<dbReference type="PROSITE" id="PS00376">
    <property type="entry name" value="ADOMET_SYNTHASE_1"/>
    <property type="match status" value="1"/>
</dbReference>
<dbReference type="PROSITE" id="PS00377">
    <property type="entry name" value="ADOMET_SYNTHASE_2"/>
    <property type="match status" value="1"/>
</dbReference>
<feature type="initiator methionine" description="Removed" evidence="1">
    <location>
        <position position="1"/>
    </location>
</feature>
<feature type="chain" id="PRO_0000174519" description="S-adenosylmethionine synthase">
    <location>
        <begin position="2"/>
        <end position="384"/>
    </location>
</feature>
<feature type="region of interest" description="Flexible loop" evidence="2">
    <location>
        <begin position="99"/>
        <end position="109"/>
    </location>
</feature>
<feature type="binding site" description="in other chain" evidence="2">
    <location>
        <position position="15"/>
    </location>
    <ligand>
        <name>ATP</name>
        <dbReference type="ChEBI" id="CHEBI:30616"/>
        <note>ligand shared between two neighboring subunits</note>
    </ligand>
</feature>
<feature type="binding site" evidence="2">
    <location>
        <position position="17"/>
    </location>
    <ligand>
        <name>Mg(2+)</name>
        <dbReference type="ChEBI" id="CHEBI:18420"/>
    </ligand>
</feature>
<feature type="binding site" evidence="2">
    <location>
        <position position="43"/>
    </location>
    <ligand>
        <name>K(+)</name>
        <dbReference type="ChEBI" id="CHEBI:29103"/>
    </ligand>
</feature>
<feature type="binding site" description="in other chain" evidence="2">
    <location>
        <position position="56"/>
    </location>
    <ligand>
        <name>L-methionine</name>
        <dbReference type="ChEBI" id="CHEBI:57844"/>
        <note>ligand shared between two neighboring subunits</note>
    </ligand>
</feature>
<feature type="binding site" description="in other chain" evidence="2">
    <location>
        <position position="99"/>
    </location>
    <ligand>
        <name>L-methionine</name>
        <dbReference type="ChEBI" id="CHEBI:57844"/>
        <note>ligand shared between two neighboring subunits</note>
    </ligand>
</feature>
<feature type="binding site" description="in other chain" evidence="2">
    <location>
        <begin position="164"/>
        <end position="166"/>
    </location>
    <ligand>
        <name>ATP</name>
        <dbReference type="ChEBI" id="CHEBI:30616"/>
        <note>ligand shared between two neighboring subunits</note>
    </ligand>
</feature>
<feature type="binding site" description="in other chain" evidence="2">
    <location>
        <begin position="230"/>
        <end position="231"/>
    </location>
    <ligand>
        <name>ATP</name>
        <dbReference type="ChEBI" id="CHEBI:30616"/>
        <note>ligand shared between two neighboring subunits</note>
    </ligand>
</feature>
<feature type="binding site" evidence="2">
    <location>
        <position position="239"/>
    </location>
    <ligand>
        <name>ATP</name>
        <dbReference type="ChEBI" id="CHEBI:30616"/>
        <note>ligand shared between two neighboring subunits</note>
    </ligand>
</feature>
<feature type="binding site" evidence="2">
    <location>
        <position position="239"/>
    </location>
    <ligand>
        <name>L-methionine</name>
        <dbReference type="ChEBI" id="CHEBI:57844"/>
        <note>ligand shared between two neighboring subunits</note>
    </ligand>
</feature>
<feature type="binding site" description="in other chain" evidence="2">
    <location>
        <begin position="245"/>
        <end position="246"/>
    </location>
    <ligand>
        <name>ATP</name>
        <dbReference type="ChEBI" id="CHEBI:30616"/>
        <note>ligand shared between two neighboring subunits</note>
    </ligand>
</feature>
<feature type="binding site" evidence="2">
    <location>
        <position position="262"/>
    </location>
    <ligand>
        <name>ATP</name>
        <dbReference type="ChEBI" id="CHEBI:30616"/>
        <note>ligand shared between two neighboring subunits</note>
    </ligand>
</feature>
<feature type="binding site" evidence="2">
    <location>
        <position position="266"/>
    </location>
    <ligand>
        <name>ATP</name>
        <dbReference type="ChEBI" id="CHEBI:30616"/>
        <note>ligand shared between two neighboring subunits</note>
    </ligand>
</feature>
<feature type="binding site" description="in other chain" evidence="2">
    <location>
        <position position="270"/>
    </location>
    <ligand>
        <name>L-methionine</name>
        <dbReference type="ChEBI" id="CHEBI:57844"/>
        <note>ligand shared between two neighboring subunits</note>
    </ligand>
</feature>
<proteinExistence type="inferred from homology"/>
<name>METK_ECO57</name>
<reference key="1">
    <citation type="journal article" date="2001" name="Nature">
        <title>Genome sequence of enterohaemorrhagic Escherichia coli O157:H7.</title>
        <authorList>
            <person name="Perna N.T."/>
            <person name="Plunkett G. III"/>
            <person name="Burland V."/>
            <person name="Mau B."/>
            <person name="Glasner J.D."/>
            <person name="Rose D.J."/>
            <person name="Mayhew G.F."/>
            <person name="Evans P.S."/>
            <person name="Gregor J."/>
            <person name="Kirkpatrick H.A."/>
            <person name="Posfai G."/>
            <person name="Hackett J."/>
            <person name="Klink S."/>
            <person name="Boutin A."/>
            <person name="Shao Y."/>
            <person name="Miller L."/>
            <person name="Grotbeck E.J."/>
            <person name="Davis N.W."/>
            <person name="Lim A."/>
            <person name="Dimalanta E.T."/>
            <person name="Potamousis K."/>
            <person name="Apodaca J."/>
            <person name="Anantharaman T.S."/>
            <person name="Lin J."/>
            <person name="Yen G."/>
            <person name="Schwartz D.C."/>
            <person name="Welch R.A."/>
            <person name="Blattner F.R."/>
        </authorList>
    </citation>
    <scope>NUCLEOTIDE SEQUENCE [LARGE SCALE GENOMIC DNA]</scope>
    <source>
        <strain>O157:H7 / EDL933 / ATCC 700927 / EHEC</strain>
    </source>
</reference>
<reference key="2">
    <citation type="journal article" date="2001" name="DNA Res.">
        <title>Complete genome sequence of enterohemorrhagic Escherichia coli O157:H7 and genomic comparison with a laboratory strain K-12.</title>
        <authorList>
            <person name="Hayashi T."/>
            <person name="Makino K."/>
            <person name="Ohnishi M."/>
            <person name="Kurokawa K."/>
            <person name="Ishii K."/>
            <person name="Yokoyama K."/>
            <person name="Han C.-G."/>
            <person name="Ohtsubo E."/>
            <person name="Nakayama K."/>
            <person name="Murata T."/>
            <person name="Tanaka M."/>
            <person name="Tobe T."/>
            <person name="Iida T."/>
            <person name="Takami H."/>
            <person name="Honda T."/>
            <person name="Sasakawa C."/>
            <person name="Ogasawara N."/>
            <person name="Yasunaga T."/>
            <person name="Kuhara S."/>
            <person name="Shiba T."/>
            <person name="Hattori M."/>
            <person name="Shinagawa H."/>
        </authorList>
    </citation>
    <scope>NUCLEOTIDE SEQUENCE [LARGE SCALE GENOMIC DNA]</scope>
    <source>
        <strain>O157:H7 / Sakai / RIMD 0509952 / EHEC</strain>
    </source>
</reference>
<protein>
    <recommendedName>
        <fullName evidence="2">S-adenosylmethionine synthase</fullName>
        <shortName evidence="2">AdoMet synthase</shortName>
        <ecNumber evidence="2">2.5.1.6</ecNumber>
    </recommendedName>
    <alternativeName>
        <fullName evidence="2">MAT</fullName>
    </alternativeName>
    <alternativeName>
        <fullName evidence="2">Methionine adenosyltransferase</fullName>
    </alternativeName>
</protein>
<comment type="function">
    <text evidence="2">Catalyzes the formation of S-adenosylmethionine (AdoMet) from methionine and ATP. The overall synthetic reaction is composed of two sequential steps, AdoMet formation and the subsequent tripolyphosphate hydrolysis which occurs prior to release of AdoMet from the enzyme.</text>
</comment>
<comment type="catalytic activity">
    <reaction evidence="2">
        <text>L-methionine + ATP + H2O = S-adenosyl-L-methionine + phosphate + diphosphate</text>
        <dbReference type="Rhea" id="RHEA:21080"/>
        <dbReference type="ChEBI" id="CHEBI:15377"/>
        <dbReference type="ChEBI" id="CHEBI:30616"/>
        <dbReference type="ChEBI" id="CHEBI:33019"/>
        <dbReference type="ChEBI" id="CHEBI:43474"/>
        <dbReference type="ChEBI" id="CHEBI:57844"/>
        <dbReference type="ChEBI" id="CHEBI:59789"/>
        <dbReference type="EC" id="2.5.1.6"/>
    </reaction>
</comment>
<comment type="cofactor">
    <cofactor evidence="2">
        <name>Mg(2+)</name>
        <dbReference type="ChEBI" id="CHEBI:18420"/>
    </cofactor>
    <text evidence="2">Binds 2 divalent ions per subunit.</text>
</comment>
<comment type="cofactor">
    <cofactor evidence="2">
        <name>K(+)</name>
        <dbReference type="ChEBI" id="CHEBI:29103"/>
    </cofactor>
    <text evidence="2">Binds 1 potassium ion per subunit.</text>
</comment>
<comment type="pathway">
    <text evidence="2">Amino-acid biosynthesis; S-adenosyl-L-methionine biosynthesis; S-adenosyl-L-methionine from L-methionine: step 1/1.</text>
</comment>
<comment type="subunit">
    <text evidence="2">Homotetramer; dimer of dimers.</text>
</comment>
<comment type="subcellular location">
    <subcellularLocation>
        <location evidence="2">Cytoplasm</location>
    </subcellularLocation>
</comment>
<comment type="similarity">
    <text evidence="2">Belongs to the AdoMet synthase family.</text>
</comment>
<keyword id="KW-0067">ATP-binding</keyword>
<keyword id="KW-0963">Cytoplasm</keyword>
<keyword id="KW-0460">Magnesium</keyword>
<keyword id="KW-0479">Metal-binding</keyword>
<keyword id="KW-0547">Nucleotide-binding</keyword>
<keyword id="KW-0554">One-carbon metabolism</keyword>
<keyword id="KW-0630">Potassium</keyword>
<keyword id="KW-1185">Reference proteome</keyword>
<keyword id="KW-0808">Transferase</keyword>